<reference key="1">
    <citation type="journal article" date="1988" name="Nucleic Acids Res.">
        <title>Expression of the rpl23, rpl2 and rps19 genes in spinach chloroplasts.</title>
        <authorList>
            <person name="Thomas F."/>
            <person name="Massenet O."/>
            <person name="Dorne A.-M."/>
            <person name="Briat J.-F."/>
            <person name="Mache R."/>
        </authorList>
    </citation>
    <scope>NUCLEOTIDE SEQUENCE [GENOMIC DNA]</scope>
    <scope>TRANSCRIPTION</scope>
</reference>
<reference key="2">
    <citation type="journal article" date="2001" name="Plant Mol. Biol.">
        <title>The plastid chromosome of spinach (Spinacia oleracea): complete nucleotide sequence and gene organization.</title>
        <authorList>
            <person name="Schmitz-Linneweber C."/>
            <person name="Maier R.M."/>
            <person name="Alcaraz J.-P."/>
            <person name="Cottet A."/>
            <person name="Herrmann R.G."/>
            <person name="Mache R."/>
        </authorList>
    </citation>
    <scope>NUCLEOTIDE SEQUENCE [LARGE SCALE GENOMIC DNA]</scope>
    <source>
        <strain>cv. Geant d'hiver</strain>
        <strain>cv. Monatol</strain>
    </source>
</reference>
<sequence length="90" mass="10655">MDGIKYAVFTDKSIQLLGKKQYTSNVESRSTRTEIKHWVELWNSYEMNSHRLPGKGRRMGPIMGHTMHYRRMIITLQSSYSIPPLRKKRT</sequence>
<comment type="function">
    <text evidence="1">Binds to 23S rRNA.</text>
</comment>
<comment type="subunit">
    <text evidence="1">Part of the 50S ribosomal subunit.</text>
</comment>
<comment type="subcellular location">
    <subcellularLocation>
        <location>Plastid</location>
        <location>Chloroplast</location>
    </subcellularLocation>
</comment>
<comment type="similarity">
    <text evidence="2">Belongs to the universal ribosomal protein uL23 family.</text>
</comment>
<comment type="caution">
    <text evidence="2">Could be the product of a pseudogene. RPL23 has been split into 2 overlapping ORFs in the Caryophyllales. Although these genes are transcribed, this is probably the product of a pseudogene; the protein purified with the 50S subunit is the product of a nuclear-encoded gene (AC Q9LWB5).</text>
</comment>
<feature type="chain" id="PRO_0000129464" description="Putative large ribosomal subunit protein uL23c">
    <location>
        <begin position="1"/>
        <end position="90"/>
    </location>
</feature>
<feature type="region of interest" description="Coded by first part of gene">
    <location>
        <begin position="1"/>
        <end position="46"/>
    </location>
</feature>
<feature type="region of interest" description="Coded by second part of gene">
    <location>
        <begin position="47"/>
        <end position="90"/>
    </location>
</feature>
<dbReference type="EMBL" id="X07462">
    <property type="protein sequence ID" value="CAA30343.1"/>
    <property type="molecule type" value="Genomic_DNA"/>
</dbReference>
<dbReference type="EMBL" id="X07462">
    <property type="protein sequence ID" value="CAA30344.1"/>
    <property type="molecule type" value="Genomic_DNA"/>
</dbReference>
<dbReference type="EMBL" id="AJ400848">
    <property type="status" value="NOT_ANNOTATED_CDS"/>
    <property type="molecule type" value="Genomic_DNA"/>
</dbReference>
<dbReference type="PIR" id="S00728">
    <property type="entry name" value="S00728"/>
</dbReference>
<dbReference type="SMR" id="P18664"/>
<dbReference type="FunCoup" id="P18664">
    <property type="interactions" value="64"/>
</dbReference>
<dbReference type="STRING" id="3562.P18664"/>
<dbReference type="InParanoid" id="P18664"/>
<dbReference type="Proteomes" id="UP001155700">
    <property type="component" value="Unplaced"/>
</dbReference>
<dbReference type="GO" id="GO:0009507">
    <property type="term" value="C:chloroplast"/>
    <property type="evidence" value="ECO:0007669"/>
    <property type="project" value="UniProtKB-SubCell"/>
</dbReference>
<dbReference type="GO" id="GO:0022625">
    <property type="term" value="C:cytosolic large ribosomal subunit"/>
    <property type="evidence" value="ECO:0000318"/>
    <property type="project" value="GO_Central"/>
</dbReference>
<dbReference type="GO" id="GO:0003729">
    <property type="term" value="F:mRNA binding"/>
    <property type="evidence" value="ECO:0007669"/>
    <property type="project" value="UniProtKB-ARBA"/>
</dbReference>
<dbReference type="GO" id="GO:0019843">
    <property type="term" value="F:rRNA binding"/>
    <property type="evidence" value="ECO:0007669"/>
    <property type="project" value="UniProtKB-UniRule"/>
</dbReference>
<dbReference type="GO" id="GO:0003735">
    <property type="term" value="F:structural constituent of ribosome"/>
    <property type="evidence" value="ECO:0000318"/>
    <property type="project" value="GO_Central"/>
</dbReference>
<dbReference type="GO" id="GO:0006412">
    <property type="term" value="P:translation"/>
    <property type="evidence" value="ECO:0007669"/>
    <property type="project" value="UniProtKB-UniRule"/>
</dbReference>
<dbReference type="FunFam" id="3.30.70.330:FF:000002">
    <property type="entry name" value="50S ribosomal protein L23, chloroplastic"/>
    <property type="match status" value="1"/>
</dbReference>
<dbReference type="Gene3D" id="3.30.70.330">
    <property type="match status" value="1"/>
</dbReference>
<dbReference type="HAMAP" id="MF_01369_B">
    <property type="entry name" value="Ribosomal_uL23_B"/>
    <property type="match status" value="1"/>
</dbReference>
<dbReference type="InterPro" id="IPR012677">
    <property type="entry name" value="Nucleotide-bd_a/b_plait_sf"/>
</dbReference>
<dbReference type="InterPro" id="IPR013025">
    <property type="entry name" value="Ribosomal_uL23-like"/>
</dbReference>
<dbReference type="InterPro" id="IPR012678">
    <property type="entry name" value="Ribosomal_uL23/eL15/eS24_sf"/>
</dbReference>
<dbReference type="InterPro" id="IPR001014">
    <property type="entry name" value="Ribosomal_uL23_CS"/>
</dbReference>
<dbReference type="Pfam" id="PF00276">
    <property type="entry name" value="Ribosomal_L23"/>
    <property type="match status" value="1"/>
</dbReference>
<dbReference type="SUPFAM" id="SSF54189">
    <property type="entry name" value="Ribosomal proteins S24e, L23 and L15e"/>
    <property type="match status" value="1"/>
</dbReference>
<dbReference type="PROSITE" id="PS00050">
    <property type="entry name" value="RIBOSOMAL_L23"/>
    <property type="match status" value="1"/>
</dbReference>
<organism>
    <name type="scientific">Spinacia oleracea</name>
    <name type="common">Spinach</name>
    <dbReference type="NCBI Taxonomy" id="3562"/>
    <lineage>
        <taxon>Eukaryota</taxon>
        <taxon>Viridiplantae</taxon>
        <taxon>Streptophyta</taxon>
        <taxon>Embryophyta</taxon>
        <taxon>Tracheophyta</taxon>
        <taxon>Spermatophyta</taxon>
        <taxon>Magnoliopsida</taxon>
        <taxon>eudicotyledons</taxon>
        <taxon>Gunneridae</taxon>
        <taxon>Pentapetalae</taxon>
        <taxon>Caryophyllales</taxon>
        <taxon>Chenopodiaceae</taxon>
        <taxon>Chenopodioideae</taxon>
        <taxon>Anserineae</taxon>
        <taxon>Spinacia</taxon>
    </lineage>
</organism>
<keyword id="KW-0150">Chloroplast</keyword>
<keyword id="KW-0934">Plastid</keyword>
<keyword id="KW-1185">Reference proteome</keyword>
<keyword id="KW-0687">Ribonucleoprotein</keyword>
<keyword id="KW-0689">Ribosomal protein</keyword>
<keyword id="KW-0694">RNA-binding</keyword>
<keyword id="KW-0699">rRNA-binding</keyword>
<accession>P18664</accession>
<protein>
    <recommendedName>
        <fullName evidence="2">Putative large ribosomal subunit protein uL23c</fullName>
    </recommendedName>
</protein>
<proteinExistence type="uncertain"/>
<evidence type="ECO:0000250" key="1"/>
<evidence type="ECO:0000305" key="2"/>
<name>RK232_SPIOL</name>
<geneLocation type="chloroplast"/>
<gene>
    <name type="primary">rpl23</name>
</gene>